<name>IR3IP_RAT</name>
<organism>
    <name type="scientific">Rattus norvegicus</name>
    <name type="common">Rat</name>
    <dbReference type="NCBI Taxonomy" id="10116"/>
    <lineage>
        <taxon>Eukaryota</taxon>
        <taxon>Metazoa</taxon>
        <taxon>Chordata</taxon>
        <taxon>Craniata</taxon>
        <taxon>Vertebrata</taxon>
        <taxon>Euteleostomi</taxon>
        <taxon>Mammalia</taxon>
        <taxon>Eutheria</taxon>
        <taxon>Euarchontoglires</taxon>
        <taxon>Glires</taxon>
        <taxon>Rodentia</taxon>
        <taxon>Myomorpha</taxon>
        <taxon>Muroidea</taxon>
        <taxon>Muridae</taxon>
        <taxon>Murinae</taxon>
        <taxon>Rattus</taxon>
    </lineage>
</organism>
<proteinExistence type="inferred from homology"/>
<accession>P85007</accession>
<protein>
    <recommendedName>
        <fullName evidence="4">Immediate early response 3-interacting protein 1</fullName>
    </recommendedName>
</protein>
<sequence length="82" mass="8999">MAFTLYSLMQAALLCVNAIAVLHEERFLKNIGWGTDQGIGGFGEEPGIKSQLLNLIRSVRTVMRVPLIIVNSITIVLLLLFG</sequence>
<comment type="function">
    <text evidence="1 2">Regulator of endoplasmic reticulum secretion that acts as a key determinant of brain size. Required for secretion of extracellular matrix proteins. Required for correct brain development by depositing sufficient extracellular matrix proteins for tissue integrity and the proliferation of neural progenitors (By similarity). Acts as a regulator of the unfolded protein response (UPR) (By similarity).</text>
</comment>
<comment type="subcellular location">
    <subcellularLocation>
        <location evidence="2">Endoplasmic reticulum membrane</location>
        <topology evidence="3">Multi-pass membrane protein</topology>
    </subcellularLocation>
</comment>
<comment type="similarity">
    <text evidence="4">Belongs to the YOS1 family.</text>
</comment>
<dbReference type="EMBL" id="AABR03109891">
    <property type="status" value="NOT_ANNOTATED_CDS"/>
    <property type="molecule type" value="Genomic_DNA"/>
</dbReference>
<dbReference type="RefSeq" id="NP_001400957.1">
    <property type="nucleotide sequence ID" value="NM_001414028.1"/>
</dbReference>
<dbReference type="FunCoup" id="P85007">
    <property type="interactions" value="1517"/>
</dbReference>
<dbReference type="PhosphoSitePlus" id="P85007"/>
<dbReference type="jPOST" id="P85007"/>
<dbReference type="Ensembl" id="ENSRNOT00000114887.1">
    <property type="protein sequence ID" value="ENSRNOP00000088360.1"/>
    <property type="gene ID" value="ENSRNOG00000043171.5"/>
</dbReference>
<dbReference type="GeneID" id="127566412"/>
<dbReference type="AGR" id="RGD:155663513"/>
<dbReference type="RGD" id="155663513">
    <property type="gene designation" value="Ier3ip1"/>
</dbReference>
<dbReference type="GeneTree" id="ENSGT00940000155805"/>
<dbReference type="InParanoid" id="P85007"/>
<dbReference type="PRO" id="PR:P85007"/>
<dbReference type="Proteomes" id="UP000002494">
    <property type="component" value="Chromosome 18"/>
</dbReference>
<dbReference type="GO" id="GO:0005789">
    <property type="term" value="C:endoplasmic reticulum membrane"/>
    <property type="evidence" value="ECO:0000250"/>
    <property type="project" value="UniProtKB"/>
</dbReference>
<dbReference type="GO" id="GO:0007420">
    <property type="term" value="P:brain development"/>
    <property type="evidence" value="ECO:0000250"/>
    <property type="project" value="UniProtKB"/>
</dbReference>
<dbReference type="GO" id="GO:0035265">
    <property type="term" value="P:organ growth"/>
    <property type="evidence" value="ECO:0000250"/>
    <property type="project" value="UniProtKB"/>
</dbReference>
<dbReference type="GO" id="GO:0003331">
    <property type="term" value="P:positive regulation of extracellular matrix constituent secretion"/>
    <property type="evidence" value="ECO:0000250"/>
    <property type="project" value="UniProtKB"/>
</dbReference>
<dbReference type="GO" id="GO:0050714">
    <property type="term" value="P:positive regulation of protein secretion"/>
    <property type="evidence" value="ECO:0000250"/>
    <property type="project" value="UniProtKB"/>
</dbReference>
<dbReference type="GO" id="GO:0015031">
    <property type="term" value="P:protein transport"/>
    <property type="evidence" value="ECO:0007669"/>
    <property type="project" value="UniProtKB-KW"/>
</dbReference>
<dbReference type="GO" id="GO:2000269">
    <property type="term" value="P:regulation of fibroblast apoptotic process"/>
    <property type="evidence" value="ECO:0000250"/>
    <property type="project" value="UniProtKB"/>
</dbReference>
<dbReference type="InterPro" id="IPR013880">
    <property type="entry name" value="Yos1"/>
</dbReference>
<dbReference type="PANTHER" id="PTHR15858">
    <property type="entry name" value="IMMEDIATE EARLY RESPONSE 3-INTERACTING PROTEIN 1"/>
    <property type="match status" value="1"/>
</dbReference>
<dbReference type="PANTHER" id="PTHR15858:SF0">
    <property type="entry name" value="IMMEDIATE EARLY RESPONSE 3-INTERACTING PROTEIN 1"/>
    <property type="match status" value="1"/>
</dbReference>
<dbReference type="Pfam" id="PF08571">
    <property type="entry name" value="Yos1"/>
    <property type="match status" value="1"/>
</dbReference>
<gene>
    <name evidence="5" type="primary">Ier3ip1</name>
</gene>
<evidence type="ECO:0000250" key="1">
    <source>
        <dbReference type="UniProtKB" id="Q9CR20"/>
    </source>
</evidence>
<evidence type="ECO:0000250" key="2">
    <source>
        <dbReference type="UniProtKB" id="Q9Y5U9"/>
    </source>
</evidence>
<evidence type="ECO:0000255" key="3"/>
<evidence type="ECO:0000305" key="4"/>
<evidence type="ECO:0000312" key="5">
    <source>
        <dbReference type="RGD" id="155663513"/>
    </source>
</evidence>
<feature type="chain" id="PRO_0000257963" description="Immediate early response 3-interacting protein 1">
    <location>
        <begin position="1"/>
        <end position="82"/>
    </location>
</feature>
<feature type="transmembrane region" description="Helical" evidence="3">
    <location>
        <begin position="2"/>
        <end position="22"/>
    </location>
</feature>
<feature type="transmembrane region" description="Helical" evidence="3">
    <location>
        <begin position="62"/>
        <end position="82"/>
    </location>
</feature>
<reference key="1">
    <citation type="journal article" date="2004" name="Nature">
        <title>Genome sequence of the Brown Norway rat yields insights into mammalian evolution.</title>
        <authorList>
            <person name="Gibbs R.A."/>
            <person name="Weinstock G.M."/>
            <person name="Metzker M.L."/>
            <person name="Muzny D.M."/>
            <person name="Sodergren E.J."/>
            <person name="Scherer S."/>
            <person name="Scott G."/>
            <person name="Steffen D."/>
            <person name="Worley K.C."/>
            <person name="Burch P.E."/>
            <person name="Okwuonu G."/>
            <person name="Hines S."/>
            <person name="Lewis L."/>
            <person name="Deramo C."/>
            <person name="Delgado O."/>
            <person name="Dugan-Rocha S."/>
            <person name="Miner G."/>
            <person name="Morgan M."/>
            <person name="Hawes A."/>
            <person name="Gill R."/>
            <person name="Holt R.A."/>
            <person name="Adams M.D."/>
            <person name="Amanatides P.G."/>
            <person name="Baden-Tillson H."/>
            <person name="Barnstead M."/>
            <person name="Chin S."/>
            <person name="Evans C.A."/>
            <person name="Ferriera S."/>
            <person name="Fosler C."/>
            <person name="Glodek A."/>
            <person name="Gu Z."/>
            <person name="Jennings D."/>
            <person name="Kraft C.L."/>
            <person name="Nguyen T."/>
            <person name="Pfannkoch C.M."/>
            <person name="Sitter C."/>
            <person name="Sutton G.G."/>
            <person name="Venter J.C."/>
            <person name="Woodage T."/>
            <person name="Smith D."/>
            <person name="Lee H.-M."/>
            <person name="Gustafson E."/>
            <person name="Cahill P."/>
            <person name="Kana A."/>
            <person name="Doucette-Stamm L."/>
            <person name="Weinstock K."/>
            <person name="Fechtel K."/>
            <person name="Weiss R.B."/>
            <person name="Dunn D.M."/>
            <person name="Green E.D."/>
            <person name="Blakesley R.W."/>
            <person name="Bouffard G.G."/>
            <person name="De Jong P.J."/>
            <person name="Osoegawa K."/>
            <person name="Zhu B."/>
            <person name="Marra M."/>
            <person name="Schein J."/>
            <person name="Bosdet I."/>
            <person name="Fjell C."/>
            <person name="Jones S."/>
            <person name="Krzywinski M."/>
            <person name="Mathewson C."/>
            <person name="Siddiqui A."/>
            <person name="Wye N."/>
            <person name="McPherson J."/>
            <person name="Zhao S."/>
            <person name="Fraser C.M."/>
            <person name="Shetty J."/>
            <person name="Shatsman S."/>
            <person name="Geer K."/>
            <person name="Chen Y."/>
            <person name="Abramzon S."/>
            <person name="Nierman W.C."/>
            <person name="Havlak P.H."/>
            <person name="Chen R."/>
            <person name="Durbin K.J."/>
            <person name="Egan A."/>
            <person name="Ren Y."/>
            <person name="Song X.-Z."/>
            <person name="Li B."/>
            <person name="Liu Y."/>
            <person name="Qin X."/>
            <person name="Cawley S."/>
            <person name="Cooney A.J."/>
            <person name="D'Souza L.M."/>
            <person name="Martin K."/>
            <person name="Wu J.Q."/>
            <person name="Gonzalez-Garay M.L."/>
            <person name="Jackson A.R."/>
            <person name="Kalafus K.J."/>
            <person name="McLeod M.P."/>
            <person name="Milosavljevic A."/>
            <person name="Virk D."/>
            <person name="Volkov A."/>
            <person name="Wheeler D.A."/>
            <person name="Zhang Z."/>
            <person name="Bailey J.A."/>
            <person name="Eichler E.E."/>
            <person name="Tuzun E."/>
            <person name="Birney E."/>
            <person name="Mongin E."/>
            <person name="Ureta-Vidal A."/>
            <person name="Woodwark C."/>
            <person name="Zdobnov E."/>
            <person name="Bork P."/>
            <person name="Suyama M."/>
            <person name="Torrents D."/>
            <person name="Alexandersson M."/>
            <person name="Trask B.J."/>
            <person name="Young J.M."/>
            <person name="Huang H."/>
            <person name="Wang H."/>
            <person name="Xing H."/>
            <person name="Daniels S."/>
            <person name="Gietzen D."/>
            <person name="Schmidt J."/>
            <person name="Stevens K."/>
            <person name="Vitt U."/>
            <person name="Wingrove J."/>
            <person name="Camara F."/>
            <person name="Mar Alba M."/>
            <person name="Abril J.F."/>
            <person name="Guigo R."/>
            <person name="Smit A."/>
            <person name="Dubchak I."/>
            <person name="Rubin E.M."/>
            <person name="Couronne O."/>
            <person name="Poliakov A."/>
            <person name="Huebner N."/>
            <person name="Ganten D."/>
            <person name="Goesele C."/>
            <person name="Hummel O."/>
            <person name="Kreitler T."/>
            <person name="Lee Y.-A."/>
            <person name="Monti J."/>
            <person name="Schulz H."/>
            <person name="Zimdahl H."/>
            <person name="Himmelbauer H."/>
            <person name="Lehrach H."/>
            <person name="Jacob H.J."/>
            <person name="Bromberg S."/>
            <person name="Gullings-Handley J."/>
            <person name="Jensen-Seaman M.I."/>
            <person name="Kwitek A.E."/>
            <person name="Lazar J."/>
            <person name="Pasko D."/>
            <person name="Tonellato P.J."/>
            <person name="Twigger S."/>
            <person name="Ponting C.P."/>
            <person name="Duarte J.M."/>
            <person name="Rice S."/>
            <person name="Goodstadt L."/>
            <person name="Beatson S.A."/>
            <person name="Emes R.D."/>
            <person name="Winter E.E."/>
            <person name="Webber C."/>
            <person name="Brandt P."/>
            <person name="Nyakatura G."/>
            <person name="Adetobi M."/>
            <person name="Chiaromonte F."/>
            <person name="Elnitski L."/>
            <person name="Eswara P."/>
            <person name="Hardison R.C."/>
            <person name="Hou M."/>
            <person name="Kolbe D."/>
            <person name="Makova K."/>
            <person name="Miller W."/>
            <person name="Nekrutenko A."/>
            <person name="Riemer C."/>
            <person name="Schwartz S."/>
            <person name="Taylor J."/>
            <person name="Yang S."/>
            <person name="Zhang Y."/>
            <person name="Lindpaintner K."/>
            <person name="Andrews T.D."/>
            <person name="Caccamo M."/>
            <person name="Clamp M."/>
            <person name="Clarke L."/>
            <person name="Curwen V."/>
            <person name="Durbin R.M."/>
            <person name="Eyras E."/>
            <person name="Searle S.M."/>
            <person name="Cooper G.M."/>
            <person name="Batzoglou S."/>
            <person name="Brudno M."/>
            <person name="Sidow A."/>
            <person name="Stone E.A."/>
            <person name="Payseur B.A."/>
            <person name="Bourque G."/>
            <person name="Lopez-Otin C."/>
            <person name="Puente X.S."/>
            <person name="Chakrabarti K."/>
            <person name="Chatterji S."/>
            <person name="Dewey C."/>
            <person name="Pachter L."/>
            <person name="Bray N."/>
            <person name="Yap V.B."/>
            <person name="Caspi A."/>
            <person name="Tesler G."/>
            <person name="Pevzner P.A."/>
            <person name="Haussler D."/>
            <person name="Roskin K.M."/>
            <person name="Baertsch R."/>
            <person name="Clawson H."/>
            <person name="Furey T.S."/>
            <person name="Hinrichs A.S."/>
            <person name="Karolchik D."/>
            <person name="Kent W.J."/>
            <person name="Rosenbloom K.R."/>
            <person name="Trumbower H."/>
            <person name="Weirauch M."/>
            <person name="Cooper D.N."/>
            <person name="Stenson P.D."/>
            <person name="Ma B."/>
            <person name="Brent M."/>
            <person name="Arumugam M."/>
            <person name="Shteynberg D."/>
            <person name="Copley R.R."/>
            <person name="Taylor M.S."/>
            <person name="Riethman H."/>
            <person name="Mudunuri U."/>
            <person name="Peterson J."/>
            <person name="Guyer M."/>
            <person name="Felsenfeld A."/>
            <person name="Old S."/>
            <person name="Mockrin S."/>
            <person name="Collins F.S."/>
        </authorList>
    </citation>
    <scope>NUCLEOTIDE SEQUENCE [LARGE SCALE GENOMIC DNA]</scope>
    <source>
        <strain>Brown Norway</strain>
    </source>
</reference>
<keyword id="KW-0256">Endoplasmic reticulum</keyword>
<keyword id="KW-0472">Membrane</keyword>
<keyword id="KW-0653">Protein transport</keyword>
<keyword id="KW-1185">Reference proteome</keyword>
<keyword id="KW-0812">Transmembrane</keyword>
<keyword id="KW-1133">Transmembrane helix</keyword>
<keyword id="KW-0813">Transport</keyword>